<dbReference type="EMBL" id="AF241284">
    <property type="protein sequence ID" value="AAF82464.1"/>
    <property type="molecule type" value="Genomic_DNA"/>
</dbReference>
<dbReference type="EMBL" id="DQ128159">
    <property type="protein sequence ID" value="ABB02369.1"/>
    <property type="molecule type" value="Genomic_DNA"/>
</dbReference>
<dbReference type="SMR" id="Q9MS53"/>
<dbReference type="GO" id="GO:0009535">
    <property type="term" value="C:chloroplast thylakoid membrane"/>
    <property type="evidence" value="ECO:0007669"/>
    <property type="project" value="UniProtKB-SubCell"/>
</dbReference>
<dbReference type="GO" id="GO:0009522">
    <property type="term" value="C:photosystem I"/>
    <property type="evidence" value="ECO:0007669"/>
    <property type="project" value="UniProtKB-KW"/>
</dbReference>
<dbReference type="GO" id="GO:0015979">
    <property type="term" value="P:photosynthesis"/>
    <property type="evidence" value="ECO:0007669"/>
    <property type="project" value="UniProtKB-UniRule"/>
</dbReference>
<dbReference type="HAMAP" id="MF_00828">
    <property type="entry name" value="PSI_PsaM"/>
    <property type="match status" value="1"/>
</dbReference>
<dbReference type="InterPro" id="IPR010010">
    <property type="entry name" value="PSI_PsaM"/>
</dbReference>
<dbReference type="InterPro" id="IPR037279">
    <property type="entry name" value="PSI_PsaM_sf"/>
</dbReference>
<dbReference type="NCBIfam" id="TIGR03053">
    <property type="entry name" value="PS_I_psaM"/>
    <property type="match status" value="1"/>
</dbReference>
<dbReference type="Pfam" id="PF07465">
    <property type="entry name" value="PsaM"/>
    <property type="match status" value="1"/>
</dbReference>
<dbReference type="SUPFAM" id="SSF81548">
    <property type="entry name" value="Subunit XII of photosystem I reaction centre, PsaM"/>
    <property type="match status" value="1"/>
</dbReference>
<feature type="chain" id="PRO_0000277406" description="Photosystem I reaction center subunit XII">
    <location>
        <begin position="1"/>
        <end position="31"/>
    </location>
</feature>
<feature type="transmembrane region" description="Helical" evidence="1">
    <location>
        <begin position="7"/>
        <end position="26"/>
    </location>
</feature>
<proteinExistence type="inferred from homology"/>
<evidence type="ECO:0000255" key="1">
    <source>
        <dbReference type="HAMAP-Rule" id="MF_00828"/>
    </source>
</evidence>
<organism>
    <name type="scientific">Euglena viridis</name>
    <name type="common">Cercaria viridis</name>
    <dbReference type="NCBI Taxonomy" id="3040"/>
    <lineage>
        <taxon>Eukaryota</taxon>
        <taxon>Discoba</taxon>
        <taxon>Euglenozoa</taxon>
        <taxon>Euglenida</taxon>
        <taxon>Spirocuta</taxon>
        <taxon>Euglenophyceae</taxon>
        <taxon>Euglenales</taxon>
        <taxon>Euglenaceae</taxon>
        <taxon>Euglena</taxon>
    </lineage>
</organism>
<gene>
    <name evidence="1" type="primary">psaM</name>
</gene>
<geneLocation type="chloroplast"/>
<sequence length="31" mass="3383">MTITSTQVYIALLTALIPAFFALKLGKELSK</sequence>
<comment type="subcellular location">
    <subcellularLocation>
        <location evidence="1">Plastid</location>
        <location evidence="1">Chloroplast thylakoid membrane</location>
        <topology evidence="1">Single-pass membrane protein</topology>
    </subcellularLocation>
</comment>
<comment type="similarity">
    <text evidence="1">Belongs to the PsaM family.</text>
</comment>
<protein>
    <recommendedName>
        <fullName evidence="1">Photosystem I reaction center subunit XII</fullName>
    </recommendedName>
    <alternativeName>
        <fullName evidence="1">PSI-M</fullName>
    </alternativeName>
</protein>
<name>PSAM_EUGVI</name>
<reference key="1">
    <citation type="journal article" date="2001" name="Mol. Gen. Genet.">
        <title>Comparison of psbK operon organization and group III intron content in chloroplast genomes of 12 Euglenoid species.</title>
        <authorList>
            <person name="Doetsch N.A."/>
            <person name="Thompson M.D."/>
            <person name="Favreau M.R."/>
            <person name="Hallick R.B."/>
        </authorList>
    </citation>
    <scope>NUCLEOTIDE SEQUENCE [GENOMIC DNA]</scope>
</reference>
<reference key="2">
    <citation type="submission" date="2005-07" db="EMBL/GenBank/DDBJ databases">
        <title>Evolution of genetic elements in Euglena species.</title>
        <authorList>
            <person name="Sheveleva E.V."/>
            <person name="De Armond R.L."/>
            <person name="Perkumas K.M."/>
            <person name="Giordani N.V."/>
            <person name="Hallick R.B."/>
        </authorList>
    </citation>
    <scope>NUCLEOTIDE SEQUENCE [GENOMIC DNA]</scope>
</reference>
<accession>Q9MS53</accession>
<keyword id="KW-0150">Chloroplast</keyword>
<keyword id="KW-0472">Membrane</keyword>
<keyword id="KW-0602">Photosynthesis</keyword>
<keyword id="KW-0603">Photosystem I</keyword>
<keyword id="KW-0934">Plastid</keyword>
<keyword id="KW-0793">Thylakoid</keyword>
<keyword id="KW-0812">Transmembrane</keyword>
<keyword id="KW-1133">Transmembrane helix</keyword>